<feature type="chain" id="PRO_0000278678" description="ClpXP adapter protein SpxH">
    <location>
        <begin position="1"/>
        <end position="306"/>
    </location>
</feature>
<evidence type="ECO:0000255" key="1">
    <source>
        <dbReference type="HAMAP-Rule" id="MF_02245"/>
    </source>
</evidence>
<dbReference type="EMBL" id="BA000004">
    <property type="protein sequence ID" value="BAB06574.1"/>
    <property type="molecule type" value="Genomic_DNA"/>
</dbReference>
<dbReference type="PIR" id="G84006">
    <property type="entry name" value="G84006"/>
</dbReference>
<dbReference type="RefSeq" id="WP_010899002.1">
    <property type="nucleotide sequence ID" value="NC_002570.2"/>
</dbReference>
<dbReference type="SMR" id="Q9K8Z7"/>
<dbReference type="STRING" id="272558.gene:10728765"/>
<dbReference type="KEGG" id="bha:BH2855"/>
<dbReference type="eggNOG" id="COG2761">
    <property type="taxonomic scope" value="Bacteria"/>
</dbReference>
<dbReference type="HOGENOM" id="CLU_069785_0_0_9"/>
<dbReference type="OrthoDB" id="9813770at2"/>
<dbReference type="Proteomes" id="UP000001258">
    <property type="component" value="Chromosome"/>
</dbReference>
<dbReference type="GO" id="GO:0005737">
    <property type="term" value="C:cytoplasm"/>
    <property type="evidence" value="ECO:0007669"/>
    <property type="project" value="UniProtKB-SubCell"/>
</dbReference>
<dbReference type="CDD" id="cd03025">
    <property type="entry name" value="DsbA_FrnE_like"/>
    <property type="match status" value="1"/>
</dbReference>
<dbReference type="Gene3D" id="3.40.30.10">
    <property type="entry name" value="Glutaredoxin"/>
    <property type="match status" value="1"/>
</dbReference>
<dbReference type="Gene3D" id="1.10.472.60">
    <property type="entry name" value="putative protein disulfide isomerase domain"/>
    <property type="match status" value="1"/>
</dbReference>
<dbReference type="HAMAP" id="MF_02245">
    <property type="entry name" value="Adapter_SpxH"/>
    <property type="match status" value="1"/>
</dbReference>
<dbReference type="InterPro" id="IPR046404">
    <property type="entry name" value="Adapter_SpxH"/>
</dbReference>
<dbReference type="InterPro" id="IPR036249">
    <property type="entry name" value="Thioredoxin-like_sf"/>
</dbReference>
<dbReference type="PANTHER" id="PTHR13887:SF47">
    <property type="entry name" value="CLPXP ADAPTER PROTEIN SPXH"/>
    <property type="match status" value="1"/>
</dbReference>
<dbReference type="PANTHER" id="PTHR13887">
    <property type="entry name" value="GLUTATHIONE S-TRANSFERASE KAPPA"/>
    <property type="match status" value="1"/>
</dbReference>
<dbReference type="Pfam" id="PF13743">
    <property type="entry name" value="Thioredoxin_5"/>
    <property type="match status" value="1"/>
</dbReference>
<dbReference type="SUPFAM" id="SSF52833">
    <property type="entry name" value="Thioredoxin-like"/>
    <property type="match status" value="1"/>
</dbReference>
<reference key="1">
    <citation type="journal article" date="2000" name="Nucleic Acids Res.">
        <title>Complete genome sequence of the alkaliphilic bacterium Bacillus halodurans and genomic sequence comparison with Bacillus subtilis.</title>
        <authorList>
            <person name="Takami H."/>
            <person name="Nakasone K."/>
            <person name="Takaki Y."/>
            <person name="Maeno G."/>
            <person name="Sasaki R."/>
            <person name="Masui N."/>
            <person name="Fuji F."/>
            <person name="Hirama C."/>
            <person name="Nakamura Y."/>
            <person name="Ogasawara N."/>
            <person name="Kuhara S."/>
            <person name="Horikoshi K."/>
        </authorList>
    </citation>
    <scope>NUCLEOTIDE SEQUENCE [LARGE SCALE GENOMIC DNA]</scope>
    <source>
        <strain>ATCC BAA-125 / DSM 18197 / FERM 7344 / JCM 9153 / C-125</strain>
    </source>
</reference>
<proteinExistence type="inferred from homology"/>
<gene>
    <name evidence="1" type="primary">spxH</name>
    <name type="ordered locus">BH2855</name>
</gene>
<sequence>MAHHENQTNCNDERGICSLDSDADDQKQKKRKPLEIYTFIDPLCPECWAFEPILKKLQVEYGQYFRIRFIVAGKLEAWNLCRGKYKGAQSREDLAHVWRKITETFGMPCDGDVWLEDPITSSYTPSLAIKAAELQGPQAGVRFLRKLREHLFLNKQNVTKEDILISCAQRAGLDVKEFKQDLHSKGAAKALRCDMQTTKEMDVDLVPTFVFFNDNVDEEGIKVTGHYPYHIYVQILEDMLGFKPERQPPMSLEHFLKKYEFVASIEVAVVFDLEIDEAEKQLKKLVLKQKLELVPMKYGNFWRYLE</sequence>
<accession>Q9K8Z7</accession>
<organism>
    <name type="scientific">Halalkalibacterium halodurans (strain ATCC BAA-125 / DSM 18197 / FERM 7344 / JCM 9153 / C-125)</name>
    <name type="common">Bacillus halodurans</name>
    <dbReference type="NCBI Taxonomy" id="272558"/>
    <lineage>
        <taxon>Bacteria</taxon>
        <taxon>Bacillati</taxon>
        <taxon>Bacillota</taxon>
        <taxon>Bacilli</taxon>
        <taxon>Bacillales</taxon>
        <taxon>Bacillaceae</taxon>
        <taxon>Halalkalibacterium (ex Joshi et al. 2022)</taxon>
    </lineage>
</organism>
<protein>
    <recommendedName>
        <fullName evidence="1">ClpXP adapter protein SpxH</fullName>
    </recommendedName>
</protein>
<comment type="function">
    <text evidence="1">Adapter protein required for efficient degradation of Spx by ClpXP under non-stress conditions. Interaction with Spx stabilizes Spx and exposes the C-terminus of Spx for recognition and proteolysis by ClpXP.</text>
</comment>
<comment type="subunit">
    <text evidence="1">Interacts with Spx.</text>
</comment>
<comment type="subcellular location">
    <subcellularLocation>
        <location evidence="1">Cytoplasm</location>
    </subcellularLocation>
</comment>
<comment type="similarity">
    <text evidence="1">Belongs to the SpxH family.</text>
</comment>
<name>SPXH_HALH5</name>
<keyword id="KW-0963">Cytoplasm</keyword>
<keyword id="KW-1185">Reference proteome</keyword>